<dbReference type="EC" id="3.1.3.-"/>
<dbReference type="EMBL" id="CP000606">
    <property type="protein sequence ID" value="ABO23254.1"/>
    <property type="molecule type" value="Genomic_DNA"/>
</dbReference>
<dbReference type="RefSeq" id="WP_011865186.1">
    <property type="nucleotide sequence ID" value="NC_009092.1"/>
</dbReference>
<dbReference type="SMR" id="A3QCQ6"/>
<dbReference type="STRING" id="323850.Shew_1385"/>
<dbReference type="KEGG" id="slo:Shew_1385"/>
<dbReference type="eggNOG" id="COG3143">
    <property type="taxonomic scope" value="Bacteria"/>
</dbReference>
<dbReference type="HOGENOM" id="CLU_080718_0_0_6"/>
<dbReference type="OrthoDB" id="9773007at2"/>
<dbReference type="Proteomes" id="UP000001558">
    <property type="component" value="Chromosome"/>
</dbReference>
<dbReference type="GO" id="GO:0009288">
    <property type="term" value="C:bacterial-type flagellum"/>
    <property type="evidence" value="ECO:0007669"/>
    <property type="project" value="InterPro"/>
</dbReference>
<dbReference type="GO" id="GO:0005737">
    <property type="term" value="C:cytoplasm"/>
    <property type="evidence" value="ECO:0007669"/>
    <property type="project" value="UniProtKB-SubCell"/>
</dbReference>
<dbReference type="GO" id="GO:0004721">
    <property type="term" value="F:phosphoprotein phosphatase activity"/>
    <property type="evidence" value="ECO:0007669"/>
    <property type="project" value="UniProtKB-KW"/>
</dbReference>
<dbReference type="GO" id="GO:0097588">
    <property type="term" value="P:archaeal or bacterial-type flagellum-dependent cell motility"/>
    <property type="evidence" value="ECO:0007669"/>
    <property type="project" value="UniProtKB-KW"/>
</dbReference>
<dbReference type="GO" id="GO:0006935">
    <property type="term" value="P:chemotaxis"/>
    <property type="evidence" value="ECO:0007669"/>
    <property type="project" value="UniProtKB-KW"/>
</dbReference>
<dbReference type="GO" id="GO:0050920">
    <property type="term" value="P:regulation of chemotaxis"/>
    <property type="evidence" value="ECO:0007669"/>
    <property type="project" value="InterPro"/>
</dbReference>
<dbReference type="Gene3D" id="1.10.287.500">
    <property type="entry name" value="Helix hairpin bin"/>
    <property type="match status" value="1"/>
</dbReference>
<dbReference type="InterPro" id="IPR007439">
    <property type="entry name" value="Chemotax_Pase_CheZ"/>
</dbReference>
<dbReference type="InterPro" id="IPR050992">
    <property type="entry name" value="CheZ_family_phosphatases"/>
</dbReference>
<dbReference type="PANTHER" id="PTHR43693">
    <property type="entry name" value="PROTEIN PHOSPHATASE CHEZ"/>
    <property type="match status" value="1"/>
</dbReference>
<dbReference type="PANTHER" id="PTHR43693:SF1">
    <property type="entry name" value="PROTEIN PHOSPHATASE CHEZ"/>
    <property type="match status" value="1"/>
</dbReference>
<dbReference type="Pfam" id="PF04344">
    <property type="entry name" value="CheZ"/>
    <property type="match status" value="1"/>
</dbReference>
<dbReference type="PIRSF" id="PIRSF002884">
    <property type="entry name" value="CheZ"/>
    <property type="match status" value="1"/>
</dbReference>
<dbReference type="SUPFAM" id="SSF75708">
    <property type="entry name" value="Chemotaxis phosphatase CheZ"/>
    <property type="match status" value="1"/>
</dbReference>
<gene>
    <name type="primary">cheZ</name>
    <name type="ordered locus">Shew_1385</name>
</gene>
<accession>A3QCQ6</accession>
<keyword id="KW-0145">Chemotaxis</keyword>
<keyword id="KW-0963">Cytoplasm</keyword>
<keyword id="KW-0283">Flagellar rotation</keyword>
<keyword id="KW-0378">Hydrolase</keyword>
<keyword id="KW-0904">Protein phosphatase</keyword>
<keyword id="KW-1185">Reference proteome</keyword>
<protein>
    <recommendedName>
        <fullName>Protein phosphatase CheZ</fullName>
        <ecNumber>3.1.3.-</ecNumber>
    </recommendedName>
    <alternativeName>
        <fullName>Chemotaxis protein CheZ</fullName>
    </alternativeName>
</protein>
<proteinExistence type="inferred from homology"/>
<reference key="1">
    <citation type="submission" date="2007-03" db="EMBL/GenBank/DDBJ databases">
        <title>Complete sequence of Shewanella loihica PV-4.</title>
        <authorList>
            <consortium name="US DOE Joint Genome Institute"/>
            <person name="Copeland A."/>
            <person name="Lucas S."/>
            <person name="Lapidus A."/>
            <person name="Barry K."/>
            <person name="Detter J.C."/>
            <person name="Glavina del Rio T."/>
            <person name="Hammon N."/>
            <person name="Israni S."/>
            <person name="Dalin E."/>
            <person name="Tice H."/>
            <person name="Pitluck S."/>
            <person name="Chain P."/>
            <person name="Malfatti S."/>
            <person name="Shin M."/>
            <person name="Vergez L."/>
            <person name="Schmutz J."/>
            <person name="Larimer F."/>
            <person name="Land M."/>
            <person name="Hauser L."/>
            <person name="Kyrpides N."/>
            <person name="Mikhailova N."/>
            <person name="Romine M.F."/>
            <person name="Serres G."/>
            <person name="Fredrickson J."/>
            <person name="Tiedje J."/>
            <person name="Richardson P."/>
        </authorList>
    </citation>
    <scope>NUCLEOTIDE SEQUENCE [LARGE SCALE GENOMIC DNA]</scope>
    <source>
        <strain>ATCC BAA-1088 / PV-4</strain>
    </source>
</reference>
<organism>
    <name type="scientific">Shewanella loihica (strain ATCC BAA-1088 / PV-4)</name>
    <dbReference type="NCBI Taxonomy" id="323850"/>
    <lineage>
        <taxon>Bacteria</taxon>
        <taxon>Pseudomonadati</taxon>
        <taxon>Pseudomonadota</taxon>
        <taxon>Gammaproteobacteria</taxon>
        <taxon>Alteromonadales</taxon>
        <taxon>Shewanellaceae</taxon>
        <taxon>Shewanella</taxon>
    </lineage>
</organism>
<feature type="chain" id="PRO_0000410783" description="Protein phosphatase CheZ">
    <location>
        <begin position="1"/>
        <end position="245"/>
    </location>
</feature>
<feature type="site" description="Enhances dephosphorylation of CheY-P" evidence="1">
    <location>
        <position position="175"/>
    </location>
</feature>
<comment type="function">
    <text evidence="1">Plays an important role in bacterial chemotaxis signal transduction pathway by accelerating the dephosphorylation of phosphorylated CheY (CheY-P).</text>
</comment>
<comment type="subunit">
    <text evidence="1">Homodimer.</text>
</comment>
<comment type="subcellular location">
    <subcellularLocation>
        <location evidence="1">Cytoplasm</location>
    </subcellularLocation>
</comment>
<comment type="similarity">
    <text evidence="2">Belongs to the CheZ family.</text>
</comment>
<sequence length="245" mass="27578">MQAETSGLINLAQAKQLVDLLEAGQQEMADELIRDIASPIQKELFDEVGRLTRQLHSAIVDFQVDGRLVELANSEIPDAKERLNYVIDMTEQAANKTMDAVEESLPLADALTMNVQAVKPSWDRLMRRDIQLHEFKALCHDVQQFIERSESDSNRLKELLNNILLAQDFQDLTGQMIRRVIELVREVESNLVSMLTVFGEQPATDKPRASEKCVEAEGPIMNADQRDDVVTGQDEVDDLLSSLGF</sequence>
<name>CHEZ_SHELP</name>
<evidence type="ECO:0000250" key="1"/>
<evidence type="ECO:0000305" key="2"/>